<comment type="function">
    <text>Required for the chromophorylation of the cpcA gene product.</text>
</comment>
<comment type="subunit">
    <text>CpcE and CpcF associate to form a lyase.</text>
</comment>
<comment type="similarity">
    <text evidence="1">Belongs to the CpcE/RpcE/PecE family.</text>
</comment>
<accession>P31967</accession>
<accession>B1XIU2</accession>
<gene>
    <name type="primary">cpcE</name>
    <name type="ordered locus">SYNPCC7002_A2213</name>
</gene>
<protein>
    <recommendedName>
        <fullName>Phycocyanobilin lyase subunit alpha</fullName>
        <ecNumber>4.-.-.-</ecNumber>
    </recommendedName>
    <alternativeName>
        <fullName>Phycocyanin operon protein CpcE</fullName>
    </alternativeName>
</protein>
<dbReference type="EC" id="4.-.-.-"/>
<dbReference type="EMBL" id="M93569">
    <property type="protein sequence ID" value="AAA27308.1"/>
    <property type="molecule type" value="Genomic_DNA"/>
</dbReference>
<dbReference type="EMBL" id="CP000951">
    <property type="protein sequence ID" value="ACB00194.1"/>
    <property type="molecule type" value="Genomic_DNA"/>
</dbReference>
<dbReference type="RefSeq" id="WP_012307812.1">
    <property type="nucleotide sequence ID" value="NZ_JAHHPU010000006.1"/>
</dbReference>
<dbReference type="SMR" id="P31967"/>
<dbReference type="STRING" id="32049.SYNPCC7002_A2213"/>
<dbReference type="KEGG" id="syp:SYNPCC7002_A2213"/>
<dbReference type="eggNOG" id="COG1413">
    <property type="taxonomic scope" value="Bacteria"/>
</dbReference>
<dbReference type="HOGENOM" id="CLU_1010860_0_0_3"/>
<dbReference type="BRENDA" id="4.4.1.32">
    <property type="organism ID" value="6187"/>
</dbReference>
<dbReference type="Proteomes" id="UP000001688">
    <property type="component" value="Chromosome"/>
</dbReference>
<dbReference type="GO" id="GO:0030089">
    <property type="term" value="C:phycobilisome"/>
    <property type="evidence" value="ECO:0007669"/>
    <property type="project" value="UniProtKB-KW"/>
</dbReference>
<dbReference type="GO" id="GO:0016829">
    <property type="term" value="F:lyase activity"/>
    <property type="evidence" value="ECO:0007669"/>
    <property type="project" value="UniProtKB-KW"/>
</dbReference>
<dbReference type="GO" id="GO:0016491">
    <property type="term" value="F:oxidoreductase activity"/>
    <property type="evidence" value="ECO:0007669"/>
    <property type="project" value="TreeGrafter"/>
</dbReference>
<dbReference type="Gene3D" id="1.25.10.10">
    <property type="entry name" value="Leucine-rich Repeat Variant"/>
    <property type="match status" value="2"/>
</dbReference>
<dbReference type="InterPro" id="IPR011989">
    <property type="entry name" value="ARM-like"/>
</dbReference>
<dbReference type="InterPro" id="IPR016024">
    <property type="entry name" value="ARM-type_fold"/>
</dbReference>
<dbReference type="InterPro" id="IPR004155">
    <property type="entry name" value="PBS_lyase_HEAT"/>
</dbReference>
<dbReference type="PANTHER" id="PTHR12697:SF5">
    <property type="entry name" value="DEOXYHYPUSINE HYDROXYLASE"/>
    <property type="match status" value="1"/>
</dbReference>
<dbReference type="PANTHER" id="PTHR12697">
    <property type="entry name" value="PBS LYASE HEAT-LIKE PROTEIN"/>
    <property type="match status" value="1"/>
</dbReference>
<dbReference type="Pfam" id="PF13646">
    <property type="entry name" value="HEAT_2"/>
    <property type="match status" value="1"/>
</dbReference>
<dbReference type="Pfam" id="PF03130">
    <property type="entry name" value="HEAT_PBS"/>
    <property type="match status" value="3"/>
</dbReference>
<dbReference type="SMART" id="SM00567">
    <property type="entry name" value="EZ_HEAT"/>
    <property type="match status" value="6"/>
</dbReference>
<dbReference type="SUPFAM" id="SSF48371">
    <property type="entry name" value="ARM repeat"/>
    <property type="match status" value="1"/>
</dbReference>
<feature type="chain" id="PRO_0000199270" description="Phycocyanobilin lyase subunit alpha">
    <location>
        <begin position="1"/>
        <end position="268"/>
    </location>
</feature>
<feature type="sequence conflict" description="In Ref. 1; AAA27308." evidence="1" ref="1">
    <original>R</original>
    <variation>P</variation>
    <location>
        <position position="173"/>
    </location>
</feature>
<evidence type="ECO:0000305" key="1"/>
<name>CPCE_PICP2</name>
<proteinExistence type="evidence at protein level"/>
<sequence>MSDWQMAEAWTLEEAIANIQQTEDTGKRYYAAWWFGKFRVQDERAVNALLAALKDETDRSPDGGYPLRRNAAKALGKLGNLAAVQPLIESLESPDYYVRESAAQSLEMLGDRQAIPALQALLAGGVAAAVKAEGKPHLVQPYEAVIEALGTIGATAAIAEIEPFLDHEFAKIRYAALRALYQLTQEAHYAEQLMEALNGNQLQLRRSALLDLGAIGYVPAGQAIAKAYAENSLKLISLKGILESHLQRTAETLDADGLQLLELMDSLL</sequence>
<keyword id="KW-0042">Antenna complex</keyword>
<keyword id="KW-0456">Lyase</keyword>
<keyword id="KW-0605">Phycobilisome</keyword>
<keyword id="KW-1185">Reference proteome</keyword>
<reference key="1">
    <citation type="journal article" date="1992" name="J. Biol. Chem.">
        <title>The cpcE and cpcF genes of Synechococcus sp. PCC 7002. Construction and phenotypic characterization of interposon mutants.</title>
        <authorList>
            <person name="Zhou J."/>
            <person name="Gasparich G.E."/>
            <person name="Stirewalt V.L."/>
            <person name="de Lorimier R."/>
            <person name="Bryant D.A."/>
        </authorList>
    </citation>
    <scope>NUCLEOTIDE SEQUENCE [GENOMIC DNA]</scope>
    <scope>CHARACTERIZATION</scope>
</reference>
<reference key="2">
    <citation type="submission" date="2008-02" db="EMBL/GenBank/DDBJ databases">
        <title>Complete sequence of Synechococcus sp. PCC 7002.</title>
        <authorList>
            <person name="Li T."/>
            <person name="Zhao J."/>
            <person name="Zhao C."/>
            <person name="Liu Z."/>
            <person name="Zhao F."/>
            <person name="Marquardt J."/>
            <person name="Nomura C.T."/>
            <person name="Persson S."/>
            <person name="Detter J.C."/>
            <person name="Richardson P.M."/>
            <person name="Lanz C."/>
            <person name="Schuster S.C."/>
            <person name="Wang J."/>
            <person name="Li S."/>
            <person name="Huang X."/>
            <person name="Cai T."/>
            <person name="Yu Z."/>
            <person name="Luo J."/>
            <person name="Zhao J."/>
            <person name="Bryant D.A."/>
        </authorList>
    </citation>
    <scope>NUCLEOTIDE SEQUENCE [LARGE SCALE GENOMIC DNA]</scope>
    <source>
        <strain>ATCC 27264 / PCC 7002 / PR-6</strain>
    </source>
</reference>
<reference key="3">
    <citation type="journal article" date="1992" name="Proc. Natl. Acad. Sci. U.S.A.">
        <title>Phycocyanin alpha-subunit phycocyanobilin lyase.</title>
        <authorList>
            <person name="Fairchild C.D."/>
            <person name="Zhao J."/>
            <person name="Zhou J."/>
            <person name="Colson S.E."/>
            <person name="Bryant D.A."/>
            <person name="Glazer A.N."/>
        </authorList>
    </citation>
    <scope>CHARACTERIZATION</scope>
</reference>
<organism>
    <name type="scientific">Picosynechococcus sp. (strain ATCC 27264 / PCC 7002 / PR-6)</name>
    <name type="common">Agmenellum quadruplicatum</name>
    <dbReference type="NCBI Taxonomy" id="32049"/>
    <lineage>
        <taxon>Bacteria</taxon>
        <taxon>Bacillati</taxon>
        <taxon>Cyanobacteriota</taxon>
        <taxon>Cyanophyceae</taxon>
        <taxon>Oscillatoriophycideae</taxon>
        <taxon>Chroococcales</taxon>
        <taxon>Geminocystaceae</taxon>
        <taxon>Picosynechococcus</taxon>
    </lineage>
</organism>